<evidence type="ECO:0000255" key="1">
    <source>
        <dbReference type="HAMAP-Rule" id="MF_00075"/>
    </source>
</evidence>
<evidence type="ECO:0000269" key="2">
    <source>
    </source>
</evidence>
<evidence type="ECO:0000269" key="3">
    <source>
    </source>
</evidence>
<evidence type="ECO:0000269" key="4">
    <source>
    </source>
</evidence>
<evidence type="ECO:0000269" key="5">
    <source>
    </source>
</evidence>
<evidence type="ECO:0007829" key="6">
    <source>
        <dbReference type="PDB" id="1AH9"/>
    </source>
</evidence>
<reference key="1">
    <citation type="journal article" date="1987" name="Nucleic Acids Res.">
        <title>Cloning and mapping of infA, the gene for protein synthesis initiation factor IF1.</title>
        <authorList>
            <person name="Sands J.F."/>
            <person name="Cummings H.S."/>
            <person name="Sacerdot C."/>
            <person name="Dondon L."/>
            <person name="Grunberg-Manago M."/>
            <person name="Hershey J.W.B."/>
        </authorList>
    </citation>
    <scope>NUCLEOTIDE SEQUENCE [GENOMIC DNA]</scope>
</reference>
<reference key="2">
    <citation type="journal article" date="1991" name="J. Biol. Chem.">
        <title>Structure and expression of the infA operon encoding translational initiation factor IF1. Transcriptional control by growth rate.</title>
        <authorList>
            <person name="Cummings H.S."/>
            <person name="Sands J.F."/>
            <person name="Foreman P.C."/>
            <person name="Fraser J."/>
            <person name="Hershey J.W.B."/>
        </authorList>
    </citation>
    <scope>NUCLEOTIDE SEQUENCE [GENOMIC DNA]</scope>
</reference>
<reference key="3">
    <citation type="journal article" date="1993" name="J. Bacteriol.">
        <title>The N-end rule in Escherichia coli: cloning and analysis of the leucyl, phenylalanyl-tRNA-protein transferase gene aat.</title>
        <authorList>
            <person name="Shrader T.E."/>
            <person name="Tobias J.W."/>
            <person name="Varshavsky A."/>
        </authorList>
    </citation>
    <scope>NUCLEOTIDE SEQUENCE [GENOMIC DNA]</scope>
    <source>
        <strain>K12 / MC1061 / ATCC 53338 / DSM 7140</strain>
    </source>
</reference>
<reference key="4">
    <citation type="journal article" date="1996" name="DNA Res.">
        <title>A 718-kb DNA sequence of the Escherichia coli K-12 genome corresponding to the 12.7-28.0 min region on the linkage map.</title>
        <authorList>
            <person name="Oshima T."/>
            <person name="Aiba H."/>
            <person name="Baba T."/>
            <person name="Fujita K."/>
            <person name="Hayashi K."/>
            <person name="Honjo A."/>
            <person name="Ikemoto K."/>
            <person name="Inada T."/>
            <person name="Itoh T."/>
            <person name="Kajihara M."/>
            <person name="Kanai K."/>
            <person name="Kashimoto K."/>
            <person name="Kimura S."/>
            <person name="Kitagawa M."/>
            <person name="Makino K."/>
            <person name="Masuda S."/>
            <person name="Miki T."/>
            <person name="Mizobuchi K."/>
            <person name="Mori H."/>
            <person name="Motomura K."/>
            <person name="Nakamura Y."/>
            <person name="Nashimoto H."/>
            <person name="Nishio Y."/>
            <person name="Saito N."/>
            <person name="Sampei G."/>
            <person name="Seki Y."/>
            <person name="Tagami H."/>
            <person name="Takemoto K."/>
            <person name="Wada C."/>
            <person name="Yamamoto Y."/>
            <person name="Yano M."/>
            <person name="Horiuchi T."/>
        </authorList>
    </citation>
    <scope>NUCLEOTIDE SEQUENCE [LARGE SCALE GENOMIC DNA]</scope>
    <source>
        <strain>K12 / W3110 / ATCC 27325 / DSM 5911</strain>
    </source>
</reference>
<reference key="5">
    <citation type="journal article" date="1997" name="Science">
        <title>The complete genome sequence of Escherichia coli K-12.</title>
        <authorList>
            <person name="Blattner F.R."/>
            <person name="Plunkett G. III"/>
            <person name="Bloch C.A."/>
            <person name="Perna N.T."/>
            <person name="Burland V."/>
            <person name="Riley M."/>
            <person name="Collado-Vides J."/>
            <person name="Glasner J.D."/>
            <person name="Rode C.K."/>
            <person name="Mayhew G.F."/>
            <person name="Gregor J."/>
            <person name="Davis N.W."/>
            <person name="Kirkpatrick H.A."/>
            <person name="Goeden M.A."/>
            <person name="Rose D.J."/>
            <person name="Mau B."/>
            <person name="Shao Y."/>
        </authorList>
    </citation>
    <scope>NUCLEOTIDE SEQUENCE [LARGE SCALE GENOMIC DNA]</scope>
    <source>
        <strain>K12 / MG1655 / ATCC 47076</strain>
    </source>
</reference>
<reference key="6">
    <citation type="journal article" date="2006" name="Mol. Syst. Biol.">
        <title>Highly accurate genome sequences of Escherichia coli K-12 strains MG1655 and W3110.</title>
        <authorList>
            <person name="Hayashi K."/>
            <person name="Morooka N."/>
            <person name="Yamamoto Y."/>
            <person name="Fujita K."/>
            <person name="Isono K."/>
            <person name="Choi S."/>
            <person name="Ohtsubo E."/>
            <person name="Baba T."/>
            <person name="Wanner B.L."/>
            <person name="Mori H."/>
            <person name="Horiuchi T."/>
        </authorList>
    </citation>
    <scope>NUCLEOTIDE SEQUENCE [LARGE SCALE GENOMIC DNA]</scope>
    <source>
        <strain>K12 / W3110 / ATCC 27325 / DSM 5911</strain>
    </source>
</reference>
<reference key="7">
    <citation type="journal article" date="1979" name="FEBS Lett.">
        <title>Structure-function relationships in Escherichia coli initiation factors. II. Elucidation of the primary structure of initiation factor IF-1.</title>
        <authorList>
            <person name="Pon C.L."/>
            <person name="Wittmann-Liebold B."/>
            <person name="Gualerzi C."/>
        </authorList>
    </citation>
    <scope>PROTEIN SEQUENCE OF 2-72</scope>
    <scope>FUNCTION</scope>
    <scope>SUBCELLULAR LOCATION</scope>
    <source>
        <strain>MRE-600</strain>
    </source>
</reference>
<reference key="8">
    <citation type="journal article" date="1998" name="FEMS Microbiol. Lett.">
        <title>Small genes/gene-products in Escherichia coli K-12.</title>
        <authorList>
            <person name="Wasinger V.C."/>
            <person name="Humphery-Smith I."/>
        </authorList>
    </citation>
    <scope>PROTEIN SEQUENCE OF 2-11</scope>
    <source>
        <strain>K12</strain>
    </source>
</reference>
<reference key="9">
    <citation type="journal article" date="2012" name="Nat. Struct. Mol. Biol.">
        <title>Real-time assembly landscape of bacterial 30S translation initiation complex.</title>
        <authorList>
            <person name="Milon P."/>
            <person name="Maracci C."/>
            <person name="Filonava L."/>
            <person name="Gualerzi C.O."/>
            <person name="Rodnina M.V."/>
        </authorList>
    </citation>
    <scope>FUNCTION</scope>
    <scope>SUBUNIT</scope>
</reference>
<reference key="10">
    <citation type="journal article" date="2012" name="Crit. Rev. Biochem. Mol. Biol.">
        <title>Kinetic control of translation initiation in bacteria.</title>
        <authorList>
            <person name="Milon P."/>
            <person name="Rodnina M.V."/>
        </authorList>
    </citation>
    <scope>REVIEW</scope>
</reference>
<reference key="11">
    <citation type="journal article" date="1997" name="EMBO J.">
        <title>The structure of the translational initiation factor IF1 from E.coli contains an oligomer-binding motif.</title>
        <authorList>
            <person name="Sette M."/>
            <person name="van Tilborg P."/>
            <person name="Spurio R."/>
            <person name="Kaptein R."/>
            <person name="Paci M."/>
            <person name="Gualerzi C.O."/>
            <person name="Boelens R."/>
        </authorList>
    </citation>
    <scope>STRUCTURE BY NMR</scope>
</reference>
<reference key="12">
    <citation type="journal article" date="2011" name="PLoS Biol.">
        <title>The cryo-EM structure of a complete 30S translation initiation complex from Escherichia coli.</title>
        <authorList>
            <person name="Julian P."/>
            <person name="Milon P."/>
            <person name="Agirrezabala X."/>
            <person name="Lasso G."/>
            <person name="Gil D."/>
            <person name="Rodnina M.V."/>
            <person name="Valle M."/>
        </authorList>
    </citation>
    <scope>MODEL BY ELECTRON MICROSCOPY (18.3 ANGSTROMS)</scope>
    <scope>SUBUNIT</scope>
</reference>
<accession>P69222</accession>
<accession>P02998</accession>
<name>IF1_ECOLI</name>
<dbReference type="EMBL" id="Y00373">
    <property type="protein sequence ID" value="CAA68446.1"/>
    <property type="molecule type" value="Genomic_DNA"/>
</dbReference>
<dbReference type="EMBL" id="M63145">
    <property type="protein sequence ID" value="AAC36912.1"/>
    <property type="status" value="ALT_SEQ"/>
    <property type="molecule type" value="Genomic_DNA"/>
</dbReference>
<dbReference type="EMBL" id="L10383">
    <property type="protein sequence ID" value="AAA03232.1"/>
    <property type="molecule type" value="Unassigned_DNA"/>
</dbReference>
<dbReference type="EMBL" id="U00096">
    <property type="protein sequence ID" value="AAC73970.1"/>
    <property type="molecule type" value="Genomic_DNA"/>
</dbReference>
<dbReference type="EMBL" id="AP009048">
    <property type="protein sequence ID" value="BAA35602.1"/>
    <property type="molecule type" value="Genomic_DNA"/>
</dbReference>
<dbReference type="PIR" id="A27855">
    <property type="entry name" value="FIEC1"/>
</dbReference>
<dbReference type="RefSeq" id="NP_415404.1">
    <property type="nucleotide sequence ID" value="NC_000913.3"/>
</dbReference>
<dbReference type="RefSeq" id="WP_001040187.1">
    <property type="nucleotide sequence ID" value="NZ_STEB01000006.1"/>
</dbReference>
<dbReference type="PDB" id="1AH9">
    <property type="method" value="NMR"/>
    <property type="chains" value="A=2-72"/>
</dbReference>
<dbReference type="PDB" id="1ZO1">
    <property type="method" value="EM"/>
    <property type="resolution" value="13.80 A"/>
    <property type="chains" value="W=2-70"/>
</dbReference>
<dbReference type="PDBsum" id="1AH9"/>
<dbReference type="PDBsum" id="1ZO1"/>
<dbReference type="SMR" id="P69222"/>
<dbReference type="BioGRID" id="4262047">
    <property type="interactions" value="58"/>
</dbReference>
<dbReference type="BioGRID" id="849874">
    <property type="interactions" value="3"/>
</dbReference>
<dbReference type="ComplexPortal" id="CPX-2244">
    <property type="entry name" value="Translation initiation factor complex"/>
</dbReference>
<dbReference type="DIP" id="DIP-48250N"/>
<dbReference type="FunCoup" id="P69222">
    <property type="interactions" value="540"/>
</dbReference>
<dbReference type="IntAct" id="P69222">
    <property type="interactions" value="10"/>
</dbReference>
<dbReference type="STRING" id="511145.b0884"/>
<dbReference type="jPOST" id="P69222"/>
<dbReference type="PaxDb" id="511145-b0884"/>
<dbReference type="EnsemblBacteria" id="AAC73970">
    <property type="protein sequence ID" value="AAC73970"/>
    <property type="gene ID" value="b0884"/>
</dbReference>
<dbReference type="GeneID" id="93776536"/>
<dbReference type="GeneID" id="945500"/>
<dbReference type="KEGG" id="ecj:JW0867"/>
<dbReference type="KEGG" id="eco:b0884"/>
<dbReference type="KEGG" id="ecoc:C3026_05485"/>
<dbReference type="PATRIC" id="fig|1411691.4.peg.1394"/>
<dbReference type="EchoBASE" id="EB0499"/>
<dbReference type="eggNOG" id="COG0361">
    <property type="taxonomic scope" value="Bacteria"/>
</dbReference>
<dbReference type="HOGENOM" id="CLU_151267_1_0_6"/>
<dbReference type="InParanoid" id="P69222"/>
<dbReference type="OMA" id="EGHQCLC"/>
<dbReference type="OrthoDB" id="9803250at2"/>
<dbReference type="PhylomeDB" id="P69222"/>
<dbReference type="BioCyc" id="EcoCyc:EG10504-MONOMER"/>
<dbReference type="EvolutionaryTrace" id="P69222"/>
<dbReference type="PRO" id="PR:P69222"/>
<dbReference type="Proteomes" id="UP000000625">
    <property type="component" value="Chromosome"/>
</dbReference>
<dbReference type="GO" id="GO:0005829">
    <property type="term" value="C:cytosol"/>
    <property type="evidence" value="ECO:0000314"/>
    <property type="project" value="EcoCyc"/>
</dbReference>
<dbReference type="GO" id="GO:0043022">
    <property type="term" value="F:ribosome binding"/>
    <property type="evidence" value="ECO:0000314"/>
    <property type="project" value="EcoCyc"/>
</dbReference>
<dbReference type="GO" id="GO:0019843">
    <property type="term" value="F:rRNA binding"/>
    <property type="evidence" value="ECO:0007669"/>
    <property type="project" value="UniProtKB-UniRule"/>
</dbReference>
<dbReference type="GO" id="GO:0003743">
    <property type="term" value="F:translation initiation factor activity"/>
    <property type="evidence" value="ECO:0007669"/>
    <property type="project" value="UniProtKB-UniRule"/>
</dbReference>
<dbReference type="CDD" id="cd04451">
    <property type="entry name" value="S1_IF1"/>
    <property type="match status" value="1"/>
</dbReference>
<dbReference type="FunFam" id="2.40.50.140:FF:000002">
    <property type="entry name" value="Translation initiation factor IF-1"/>
    <property type="match status" value="1"/>
</dbReference>
<dbReference type="Gene3D" id="2.40.50.140">
    <property type="entry name" value="Nucleic acid-binding proteins"/>
    <property type="match status" value="1"/>
</dbReference>
<dbReference type="HAMAP" id="MF_00075">
    <property type="entry name" value="IF_1"/>
    <property type="match status" value="1"/>
</dbReference>
<dbReference type="InterPro" id="IPR012340">
    <property type="entry name" value="NA-bd_OB-fold"/>
</dbReference>
<dbReference type="InterPro" id="IPR006196">
    <property type="entry name" value="RNA-binding_domain_S1_IF1"/>
</dbReference>
<dbReference type="InterPro" id="IPR003029">
    <property type="entry name" value="S1_domain"/>
</dbReference>
<dbReference type="InterPro" id="IPR004368">
    <property type="entry name" value="TIF_IF1"/>
</dbReference>
<dbReference type="NCBIfam" id="TIGR00008">
    <property type="entry name" value="infA"/>
    <property type="match status" value="1"/>
</dbReference>
<dbReference type="PANTHER" id="PTHR33370">
    <property type="entry name" value="TRANSLATION INITIATION FACTOR IF-1, CHLOROPLASTIC"/>
    <property type="match status" value="1"/>
</dbReference>
<dbReference type="PANTHER" id="PTHR33370:SF1">
    <property type="entry name" value="TRANSLATION INITIATION FACTOR IF-1, CHLOROPLASTIC"/>
    <property type="match status" value="1"/>
</dbReference>
<dbReference type="Pfam" id="PF01176">
    <property type="entry name" value="eIF-1a"/>
    <property type="match status" value="1"/>
</dbReference>
<dbReference type="SMART" id="SM00316">
    <property type="entry name" value="S1"/>
    <property type="match status" value="1"/>
</dbReference>
<dbReference type="SUPFAM" id="SSF50249">
    <property type="entry name" value="Nucleic acid-binding proteins"/>
    <property type="match status" value="1"/>
</dbReference>
<dbReference type="PROSITE" id="PS50832">
    <property type="entry name" value="S1_IF1_TYPE"/>
    <property type="match status" value="1"/>
</dbReference>
<proteinExistence type="evidence at protein level"/>
<comment type="function">
    <text evidence="3 4">One of the essential components for the initiation of protein synthesis. Binds in the vicinity of the A-site. Stabilizes the binding of IF-2 and IF-3 on the 30S subunit to which N-formylmethionyl-tRNA(fMet) subsequently binds. Helps modulate mRNA selection, yielding the 30S pre-initiation complex (PIC). Upon addition of the 50S ribosomal subunit, IF-1, IF-2 and IF-3 are released leaving the mature 70S translation initiation complex.</text>
</comment>
<comment type="subunit">
    <text evidence="1 2 3">Component of the 30S ribosomal translation pre-initiation complex which assembles on the 30S ribosome in the order IF-2 and IF-3, IF-1 and N-formylmethionyl-tRNA(fMet); mRNA recruitment can occur at any time during PIC assembly.</text>
</comment>
<comment type="interaction">
    <interactant intactId="EBI-1120746">
        <id>P69222</id>
    </interactant>
    <interactant intactId="EBI-1120353">
        <id>Q46864</id>
        <label>mqsA</label>
    </interactant>
    <organismsDiffer>false</organismsDiffer>
    <experiments>2</experiments>
</comment>
<comment type="subcellular location">
    <subcellularLocation>
        <location evidence="1 4">Cytoplasm</location>
    </subcellularLocation>
</comment>
<comment type="similarity">
    <text evidence="1">Belongs to the IF-1 family.</text>
</comment>
<keyword id="KW-0002">3D-structure</keyword>
<keyword id="KW-0963">Cytoplasm</keyword>
<keyword id="KW-0903">Direct protein sequencing</keyword>
<keyword id="KW-0396">Initiation factor</keyword>
<keyword id="KW-0648">Protein biosynthesis</keyword>
<keyword id="KW-1185">Reference proteome</keyword>
<keyword id="KW-0694">RNA-binding</keyword>
<keyword id="KW-0699">rRNA-binding</keyword>
<sequence length="72" mass="8250">MAKEDNIEMQGTVLETLPNTMFRVELENGHVVTAHISGKMRKNYIRILTGDKVTVELTPYDLSKGRIVFRSR</sequence>
<organism>
    <name type="scientific">Escherichia coli (strain K12)</name>
    <dbReference type="NCBI Taxonomy" id="83333"/>
    <lineage>
        <taxon>Bacteria</taxon>
        <taxon>Pseudomonadati</taxon>
        <taxon>Pseudomonadota</taxon>
        <taxon>Gammaproteobacteria</taxon>
        <taxon>Enterobacterales</taxon>
        <taxon>Enterobacteriaceae</taxon>
        <taxon>Escherichia</taxon>
    </lineage>
</organism>
<feature type="initiator methionine" description="Removed" evidence="4 5">
    <location>
        <position position="1"/>
    </location>
</feature>
<feature type="chain" id="PRO_0000095785" description="Translation initiation factor IF-1">
    <location>
        <begin position="2"/>
        <end position="72"/>
    </location>
</feature>
<feature type="domain" description="S1-like" evidence="1">
    <location>
        <begin position="2"/>
        <end position="72"/>
    </location>
</feature>
<feature type="strand" evidence="6">
    <location>
        <begin position="11"/>
        <end position="16"/>
    </location>
</feature>
<feature type="strand" evidence="6">
    <location>
        <begin position="18"/>
        <end position="26"/>
    </location>
</feature>
<feature type="strand" evidence="6">
    <location>
        <begin position="31"/>
        <end position="36"/>
    </location>
</feature>
<feature type="helix" evidence="6">
    <location>
        <begin position="40"/>
        <end position="42"/>
    </location>
</feature>
<feature type="strand" evidence="6">
    <location>
        <begin position="64"/>
        <end position="67"/>
    </location>
</feature>
<gene>
    <name evidence="1" type="primary">infA</name>
    <name type="ordered locus">b0884</name>
    <name type="ordered locus">JW0867</name>
</gene>
<protein>
    <recommendedName>
        <fullName evidence="1">Translation initiation factor IF-1</fullName>
    </recommendedName>
</protein>